<protein>
    <recommendedName>
        <fullName evidence="1">Small ribosomal subunit protein uS14</fullName>
    </recommendedName>
    <alternativeName>
        <fullName evidence="2">30S ribosomal protein S14</fullName>
    </alternativeName>
</protein>
<comment type="function">
    <text evidence="1">Binds 16S rRNA, required for the assembly of 30S particles and may also be responsible for determining the conformation of the 16S rRNA at the A site.</text>
</comment>
<comment type="subunit">
    <text evidence="1">Part of the 30S ribosomal subunit. Contacts proteins S3 and S10.</text>
</comment>
<comment type="similarity">
    <text evidence="1">Belongs to the universal ribosomal protein uS14 family.</text>
</comment>
<comment type="sequence caution" evidence="2">
    <conflict type="erroneous initiation">
        <sequence resource="EMBL-CDS" id="CAI27119"/>
    </conflict>
</comment>
<gene>
    <name evidence="1" type="primary">rpsN</name>
    <name type="ordered locus">Erum5950</name>
    <name type="ordered locus">ERWE_CDS_06250</name>
</gene>
<name>RS14_EHRRW</name>
<accession>Q5HAT5</accession>
<accession>Q5FD71</accession>
<proteinExistence type="inferred from homology"/>
<feature type="chain" id="PRO_0000354382" description="Small ribosomal subunit protein uS14">
    <location>
        <begin position="1"/>
        <end position="101"/>
    </location>
</feature>
<evidence type="ECO:0000255" key="1">
    <source>
        <dbReference type="HAMAP-Rule" id="MF_00537"/>
    </source>
</evidence>
<evidence type="ECO:0000305" key="2"/>
<dbReference type="EMBL" id="CR767821">
    <property type="protein sequence ID" value="CAH58326.1"/>
    <property type="molecule type" value="Genomic_DNA"/>
</dbReference>
<dbReference type="EMBL" id="CR925678">
    <property type="protein sequence ID" value="CAI27119.1"/>
    <property type="status" value="ALT_INIT"/>
    <property type="molecule type" value="Genomic_DNA"/>
</dbReference>
<dbReference type="RefSeq" id="WP_011155276.1">
    <property type="nucleotide sequence ID" value="NC_005295.2"/>
</dbReference>
<dbReference type="SMR" id="Q5HAT5"/>
<dbReference type="GeneID" id="33058307"/>
<dbReference type="KEGG" id="eru:Erum5950"/>
<dbReference type="KEGG" id="erw:ERWE_CDS_06250"/>
<dbReference type="eggNOG" id="COG0199">
    <property type="taxonomic scope" value="Bacteria"/>
</dbReference>
<dbReference type="HOGENOM" id="CLU_139869_0_1_5"/>
<dbReference type="Proteomes" id="UP000001021">
    <property type="component" value="Chromosome"/>
</dbReference>
<dbReference type="GO" id="GO:0005737">
    <property type="term" value="C:cytoplasm"/>
    <property type="evidence" value="ECO:0007669"/>
    <property type="project" value="UniProtKB-ARBA"/>
</dbReference>
<dbReference type="GO" id="GO:0015935">
    <property type="term" value="C:small ribosomal subunit"/>
    <property type="evidence" value="ECO:0007669"/>
    <property type="project" value="TreeGrafter"/>
</dbReference>
<dbReference type="GO" id="GO:0019843">
    <property type="term" value="F:rRNA binding"/>
    <property type="evidence" value="ECO:0007669"/>
    <property type="project" value="UniProtKB-UniRule"/>
</dbReference>
<dbReference type="GO" id="GO:0003735">
    <property type="term" value="F:structural constituent of ribosome"/>
    <property type="evidence" value="ECO:0007669"/>
    <property type="project" value="InterPro"/>
</dbReference>
<dbReference type="GO" id="GO:0006412">
    <property type="term" value="P:translation"/>
    <property type="evidence" value="ECO:0007669"/>
    <property type="project" value="UniProtKB-UniRule"/>
</dbReference>
<dbReference type="FunFam" id="1.10.287.1480:FF:000001">
    <property type="entry name" value="30S ribosomal protein S14"/>
    <property type="match status" value="1"/>
</dbReference>
<dbReference type="Gene3D" id="1.10.287.1480">
    <property type="match status" value="1"/>
</dbReference>
<dbReference type="HAMAP" id="MF_00537">
    <property type="entry name" value="Ribosomal_uS14_1"/>
    <property type="match status" value="1"/>
</dbReference>
<dbReference type="InterPro" id="IPR001209">
    <property type="entry name" value="Ribosomal_uS14"/>
</dbReference>
<dbReference type="InterPro" id="IPR023036">
    <property type="entry name" value="Ribosomal_uS14_bac/plastid"/>
</dbReference>
<dbReference type="InterPro" id="IPR018271">
    <property type="entry name" value="Ribosomal_uS14_CS"/>
</dbReference>
<dbReference type="NCBIfam" id="NF006477">
    <property type="entry name" value="PRK08881.1"/>
    <property type="match status" value="1"/>
</dbReference>
<dbReference type="PANTHER" id="PTHR19836">
    <property type="entry name" value="30S RIBOSOMAL PROTEIN S14"/>
    <property type="match status" value="1"/>
</dbReference>
<dbReference type="PANTHER" id="PTHR19836:SF19">
    <property type="entry name" value="SMALL RIBOSOMAL SUBUNIT PROTEIN US14M"/>
    <property type="match status" value="1"/>
</dbReference>
<dbReference type="Pfam" id="PF00253">
    <property type="entry name" value="Ribosomal_S14"/>
    <property type="match status" value="1"/>
</dbReference>
<dbReference type="SUPFAM" id="SSF57716">
    <property type="entry name" value="Glucocorticoid receptor-like (DNA-binding domain)"/>
    <property type="match status" value="1"/>
</dbReference>
<dbReference type="PROSITE" id="PS00527">
    <property type="entry name" value="RIBOSOMAL_S14"/>
    <property type="match status" value="1"/>
</dbReference>
<organism>
    <name type="scientific">Ehrlichia ruminantium (strain Welgevonden)</name>
    <dbReference type="NCBI Taxonomy" id="254945"/>
    <lineage>
        <taxon>Bacteria</taxon>
        <taxon>Pseudomonadati</taxon>
        <taxon>Pseudomonadota</taxon>
        <taxon>Alphaproteobacteria</taxon>
        <taxon>Rickettsiales</taxon>
        <taxon>Anaplasmataceae</taxon>
        <taxon>Ehrlichia</taxon>
    </lineage>
</organism>
<sequence length="101" mass="11817">MSRKSVIQRNLKRISICDRLKSKREKLRAIIKDQSISMNDRFLAQVKLSKLPRDSSYIRIRNRCLITGRPRGCYRKFKVSRIVLRQLGSIGQIPGLTKSSW</sequence>
<reference key="1">
    <citation type="journal article" date="2005" name="Proc. Natl. Acad. Sci. U.S.A.">
        <title>The genome of the heartwater agent Ehrlichia ruminantium contains multiple tandem repeats of actively variable copy number.</title>
        <authorList>
            <person name="Collins N.E."/>
            <person name="Liebenberg J."/>
            <person name="de Villiers E.P."/>
            <person name="Brayton K.A."/>
            <person name="Louw E."/>
            <person name="Pretorius A."/>
            <person name="Faber F.E."/>
            <person name="van Heerden H."/>
            <person name="Josemans A."/>
            <person name="van Kleef M."/>
            <person name="Steyn H.C."/>
            <person name="van Strijp M.F."/>
            <person name="Zweygarth E."/>
            <person name="Jongejan F."/>
            <person name="Maillard J.C."/>
            <person name="Berthier D."/>
            <person name="Botha M."/>
            <person name="Joubert F."/>
            <person name="Corton C.H."/>
            <person name="Thomson N.R."/>
            <person name="Allsopp M.T."/>
            <person name="Allsopp B.A."/>
        </authorList>
    </citation>
    <scope>NUCLEOTIDE SEQUENCE [LARGE SCALE GENOMIC DNA]</scope>
    <source>
        <strain>Welgevonden</strain>
    </source>
</reference>
<reference key="2">
    <citation type="journal article" date="2006" name="J. Bacteriol.">
        <title>Comparative genomic analysis of three strains of Ehrlichia ruminantium reveals an active process of genome size plasticity.</title>
        <authorList>
            <person name="Frutos R."/>
            <person name="Viari A."/>
            <person name="Ferraz C."/>
            <person name="Morgat A."/>
            <person name="Eychenie S."/>
            <person name="Kandassamy Y."/>
            <person name="Chantal I."/>
            <person name="Bensaid A."/>
            <person name="Coissac E."/>
            <person name="Vachiery N."/>
            <person name="Demaille J."/>
            <person name="Martinez D."/>
        </authorList>
    </citation>
    <scope>NUCLEOTIDE SEQUENCE [LARGE SCALE GENOMIC DNA]</scope>
    <source>
        <strain>Welgevonden</strain>
    </source>
</reference>
<keyword id="KW-0687">Ribonucleoprotein</keyword>
<keyword id="KW-0689">Ribosomal protein</keyword>
<keyword id="KW-0694">RNA-binding</keyword>
<keyword id="KW-0699">rRNA-binding</keyword>